<feature type="chain" id="PRO_0000139855" description="Large ribosomal subunit protein eL43">
    <location>
        <begin position="1"/>
        <end position="70"/>
    </location>
</feature>
<feature type="zinc finger region" description="C4-type" evidence="1">
    <location>
        <begin position="36"/>
        <end position="58"/>
    </location>
</feature>
<feature type="binding site" evidence="1">
    <location>
        <position position="36"/>
    </location>
    <ligand>
        <name>Zn(2+)</name>
        <dbReference type="ChEBI" id="CHEBI:29105"/>
    </ligand>
</feature>
<feature type="binding site" evidence="1">
    <location>
        <position position="39"/>
    </location>
    <ligand>
        <name>Zn(2+)</name>
        <dbReference type="ChEBI" id="CHEBI:29105"/>
    </ligand>
</feature>
<feature type="binding site" evidence="1">
    <location>
        <position position="55"/>
    </location>
    <ligand>
        <name>Zn(2+)</name>
        <dbReference type="ChEBI" id="CHEBI:29105"/>
    </ligand>
</feature>
<feature type="binding site" evidence="1">
    <location>
        <position position="58"/>
    </location>
    <ligand>
        <name>Zn(2+)</name>
        <dbReference type="ChEBI" id="CHEBI:29105"/>
    </ligand>
</feature>
<gene>
    <name evidence="1" type="primary">rpl37ae</name>
    <name type="ordered locus">STK_04415</name>
    <name type="ORF">STS063</name>
</gene>
<comment type="function">
    <text evidence="1">Binds to the 23S rRNA.</text>
</comment>
<comment type="cofactor">
    <cofactor evidence="1">
        <name>Zn(2+)</name>
        <dbReference type="ChEBI" id="CHEBI:29105"/>
    </cofactor>
    <text evidence="1">Binds 1 zinc ion per subunit.</text>
</comment>
<comment type="subunit">
    <text evidence="1">Part of the 50S ribosomal subunit.</text>
</comment>
<comment type="similarity">
    <text evidence="1">Belongs to the eukaryotic ribosomal protein eL43 family. Putative zinc-binding subfamily.</text>
</comment>
<dbReference type="EMBL" id="BA000023">
    <property type="protein sequence ID" value="BAB65431.1"/>
    <property type="molecule type" value="Genomic_DNA"/>
</dbReference>
<dbReference type="RefSeq" id="WP_010978414.1">
    <property type="nucleotide sequence ID" value="NC_003106.2"/>
</dbReference>
<dbReference type="SMR" id="Q975H0"/>
<dbReference type="STRING" id="273063.STK_04415"/>
<dbReference type="KEGG" id="sto:STK_04415"/>
<dbReference type="PATRIC" id="fig|273063.9.peg.513"/>
<dbReference type="eggNOG" id="arCOG04208">
    <property type="taxonomic scope" value="Archaea"/>
</dbReference>
<dbReference type="OrthoDB" id="372011at2157"/>
<dbReference type="Proteomes" id="UP000001015">
    <property type="component" value="Chromosome"/>
</dbReference>
<dbReference type="GO" id="GO:1990904">
    <property type="term" value="C:ribonucleoprotein complex"/>
    <property type="evidence" value="ECO:0007669"/>
    <property type="project" value="UniProtKB-KW"/>
</dbReference>
<dbReference type="GO" id="GO:0005840">
    <property type="term" value="C:ribosome"/>
    <property type="evidence" value="ECO:0007669"/>
    <property type="project" value="UniProtKB-KW"/>
</dbReference>
<dbReference type="GO" id="GO:0070180">
    <property type="term" value="F:large ribosomal subunit rRNA binding"/>
    <property type="evidence" value="ECO:0007669"/>
    <property type="project" value="UniProtKB-UniRule"/>
</dbReference>
<dbReference type="GO" id="GO:0003735">
    <property type="term" value="F:structural constituent of ribosome"/>
    <property type="evidence" value="ECO:0007669"/>
    <property type="project" value="InterPro"/>
</dbReference>
<dbReference type="GO" id="GO:0008270">
    <property type="term" value="F:zinc ion binding"/>
    <property type="evidence" value="ECO:0007669"/>
    <property type="project" value="UniProtKB-UniRule"/>
</dbReference>
<dbReference type="GO" id="GO:0006412">
    <property type="term" value="P:translation"/>
    <property type="evidence" value="ECO:0007669"/>
    <property type="project" value="UniProtKB-UniRule"/>
</dbReference>
<dbReference type="Gene3D" id="2.20.25.30">
    <property type="match status" value="1"/>
</dbReference>
<dbReference type="HAMAP" id="MF_00327">
    <property type="entry name" value="Ribosomal_eL43"/>
    <property type="match status" value="1"/>
</dbReference>
<dbReference type="InterPro" id="IPR011331">
    <property type="entry name" value="Ribosomal_eL37/eL43"/>
</dbReference>
<dbReference type="InterPro" id="IPR002674">
    <property type="entry name" value="Ribosomal_eL43"/>
</dbReference>
<dbReference type="InterPro" id="IPR050522">
    <property type="entry name" value="Ribosomal_protein_eL43"/>
</dbReference>
<dbReference type="InterPro" id="IPR011332">
    <property type="entry name" value="Ribosomal_zn-bd"/>
</dbReference>
<dbReference type="NCBIfam" id="NF003058">
    <property type="entry name" value="PRK03976.1"/>
    <property type="match status" value="1"/>
</dbReference>
<dbReference type="PANTHER" id="PTHR48129">
    <property type="entry name" value="60S RIBOSOMAL PROTEIN L37A"/>
    <property type="match status" value="1"/>
</dbReference>
<dbReference type="PANTHER" id="PTHR48129:SF1">
    <property type="entry name" value="LARGE RIBOSOMAL SUBUNIT PROTEIN EL43"/>
    <property type="match status" value="1"/>
</dbReference>
<dbReference type="Pfam" id="PF01780">
    <property type="entry name" value="Ribosomal_L37ae"/>
    <property type="match status" value="1"/>
</dbReference>
<dbReference type="SUPFAM" id="SSF57829">
    <property type="entry name" value="Zn-binding ribosomal proteins"/>
    <property type="match status" value="1"/>
</dbReference>
<accession>Q975H0</accession>
<sequence length="70" mass="7891">MGKVTGIAGRFGARYGSSVRKKWKEIMEKRYQDHQCPVCKTTGKVVRIASGVWYCKKCGAKWAGLAYTPY</sequence>
<keyword id="KW-0479">Metal-binding</keyword>
<keyword id="KW-1185">Reference proteome</keyword>
<keyword id="KW-0687">Ribonucleoprotein</keyword>
<keyword id="KW-0689">Ribosomal protein</keyword>
<keyword id="KW-0694">RNA-binding</keyword>
<keyword id="KW-0699">rRNA-binding</keyword>
<keyword id="KW-0862">Zinc</keyword>
<keyword id="KW-0863">Zinc-finger</keyword>
<name>RL37A_SULTO</name>
<proteinExistence type="inferred from homology"/>
<reference key="1">
    <citation type="journal article" date="2001" name="DNA Res.">
        <title>Complete genome sequence of an aerobic thermoacidophilic Crenarchaeon, Sulfolobus tokodaii strain7.</title>
        <authorList>
            <person name="Kawarabayasi Y."/>
            <person name="Hino Y."/>
            <person name="Horikawa H."/>
            <person name="Jin-no K."/>
            <person name="Takahashi M."/>
            <person name="Sekine M."/>
            <person name="Baba S."/>
            <person name="Ankai A."/>
            <person name="Kosugi H."/>
            <person name="Hosoyama A."/>
            <person name="Fukui S."/>
            <person name="Nagai Y."/>
            <person name="Nishijima K."/>
            <person name="Otsuka R."/>
            <person name="Nakazawa H."/>
            <person name="Takamiya M."/>
            <person name="Kato Y."/>
            <person name="Yoshizawa T."/>
            <person name="Tanaka T."/>
            <person name="Kudoh Y."/>
            <person name="Yamazaki J."/>
            <person name="Kushida N."/>
            <person name="Oguchi A."/>
            <person name="Aoki K."/>
            <person name="Masuda S."/>
            <person name="Yanagii M."/>
            <person name="Nishimura M."/>
            <person name="Yamagishi A."/>
            <person name="Oshima T."/>
            <person name="Kikuchi H."/>
        </authorList>
    </citation>
    <scope>NUCLEOTIDE SEQUENCE [LARGE SCALE GENOMIC DNA]</scope>
    <source>
        <strain>DSM 16993 / JCM 10545 / NBRC 100140 / 7</strain>
    </source>
</reference>
<protein>
    <recommendedName>
        <fullName evidence="1">Large ribosomal subunit protein eL43</fullName>
    </recommendedName>
    <alternativeName>
        <fullName evidence="2">50S ribosomal protein L37Ae</fullName>
    </alternativeName>
    <alternativeName>
        <fullName evidence="1">Ribosomal protein L43e</fullName>
    </alternativeName>
</protein>
<organism>
    <name type="scientific">Sulfurisphaera tokodaii (strain DSM 16993 / JCM 10545 / NBRC 100140 / 7)</name>
    <name type="common">Sulfolobus tokodaii</name>
    <dbReference type="NCBI Taxonomy" id="273063"/>
    <lineage>
        <taxon>Archaea</taxon>
        <taxon>Thermoproteota</taxon>
        <taxon>Thermoprotei</taxon>
        <taxon>Sulfolobales</taxon>
        <taxon>Sulfolobaceae</taxon>
        <taxon>Sulfurisphaera</taxon>
    </lineage>
</organism>
<evidence type="ECO:0000255" key="1">
    <source>
        <dbReference type="HAMAP-Rule" id="MF_00327"/>
    </source>
</evidence>
<evidence type="ECO:0000305" key="2"/>